<dbReference type="EC" id="2.1.3.2" evidence="1"/>
<dbReference type="EMBL" id="BA000028">
    <property type="protein sequence ID" value="BAC13444.1"/>
    <property type="molecule type" value="Genomic_DNA"/>
</dbReference>
<dbReference type="RefSeq" id="WP_011065889.1">
    <property type="nucleotide sequence ID" value="NC_004193.1"/>
</dbReference>
<dbReference type="SMR" id="Q8ER38"/>
<dbReference type="STRING" id="221109.gene:10733728"/>
<dbReference type="KEGG" id="oih:OB1488"/>
<dbReference type="eggNOG" id="COG0540">
    <property type="taxonomic scope" value="Bacteria"/>
</dbReference>
<dbReference type="HOGENOM" id="CLU_043846_2_1_9"/>
<dbReference type="OrthoDB" id="9774690at2"/>
<dbReference type="PhylomeDB" id="Q8ER38"/>
<dbReference type="UniPathway" id="UPA00070">
    <property type="reaction ID" value="UER00116"/>
</dbReference>
<dbReference type="Proteomes" id="UP000000822">
    <property type="component" value="Chromosome"/>
</dbReference>
<dbReference type="GO" id="GO:0005829">
    <property type="term" value="C:cytosol"/>
    <property type="evidence" value="ECO:0007669"/>
    <property type="project" value="TreeGrafter"/>
</dbReference>
<dbReference type="GO" id="GO:0016597">
    <property type="term" value="F:amino acid binding"/>
    <property type="evidence" value="ECO:0007669"/>
    <property type="project" value="InterPro"/>
</dbReference>
<dbReference type="GO" id="GO:0004070">
    <property type="term" value="F:aspartate carbamoyltransferase activity"/>
    <property type="evidence" value="ECO:0007669"/>
    <property type="project" value="UniProtKB-UniRule"/>
</dbReference>
<dbReference type="GO" id="GO:0006207">
    <property type="term" value="P:'de novo' pyrimidine nucleobase biosynthetic process"/>
    <property type="evidence" value="ECO:0007669"/>
    <property type="project" value="InterPro"/>
</dbReference>
<dbReference type="GO" id="GO:0044205">
    <property type="term" value="P:'de novo' UMP biosynthetic process"/>
    <property type="evidence" value="ECO:0007669"/>
    <property type="project" value="UniProtKB-UniRule"/>
</dbReference>
<dbReference type="GO" id="GO:0006520">
    <property type="term" value="P:amino acid metabolic process"/>
    <property type="evidence" value="ECO:0007669"/>
    <property type="project" value="InterPro"/>
</dbReference>
<dbReference type="FunFam" id="3.40.50.1370:FF:000011">
    <property type="entry name" value="Aspartate carbamoyltransferase"/>
    <property type="match status" value="1"/>
</dbReference>
<dbReference type="Gene3D" id="3.40.50.1370">
    <property type="entry name" value="Aspartate/ornithine carbamoyltransferase"/>
    <property type="match status" value="2"/>
</dbReference>
<dbReference type="HAMAP" id="MF_00001">
    <property type="entry name" value="Asp_carb_tr"/>
    <property type="match status" value="1"/>
</dbReference>
<dbReference type="InterPro" id="IPR006132">
    <property type="entry name" value="Asp/Orn_carbamoyltranf_P-bd"/>
</dbReference>
<dbReference type="InterPro" id="IPR006130">
    <property type="entry name" value="Asp/Orn_carbamoylTrfase"/>
</dbReference>
<dbReference type="InterPro" id="IPR036901">
    <property type="entry name" value="Asp/Orn_carbamoylTrfase_sf"/>
</dbReference>
<dbReference type="InterPro" id="IPR002082">
    <property type="entry name" value="Asp_carbamoyltransf"/>
</dbReference>
<dbReference type="InterPro" id="IPR006131">
    <property type="entry name" value="Asp_carbamoyltransf_Asp/Orn-bd"/>
</dbReference>
<dbReference type="NCBIfam" id="TIGR00670">
    <property type="entry name" value="asp_carb_tr"/>
    <property type="match status" value="1"/>
</dbReference>
<dbReference type="NCBIfam" id="NF002032">
    <property type="entry name" value="PRK00856.1"/>
    <property type="match status" value="1"/>
</dbReference>
<dbReference type="PANTHER" id="PTHR45753:SF6">
    <property type="entry name" value="ASPARTATE CARBAMOYLTRANSFERASE"/>
    <property type="match status" value="1"/>
</dbReference>
<dbReference type="PANTHER" id="PTHR45753">
    <property type="entry name" value="ORNITHINE CARBAMOYLTRANSFERASE, MITOCHONDRIAL"/>
    <property type="match status" value="1"/>
</dbReference>
<dbReference type="Pfam" id="PF00185">
    <property type="entry name" value="OTCace"/>
    <property type="match status" value="1"/>
</dbReference>
<dbReference type="Pfam" id="PF02729">
    <property type="entry name" value="OTCace_N"/>
    <property type="match status" value="1"/>
</dbReference>
<dbReference type="PRINTS" id="PR00100">
    <property type="entry name" value="AOTCASE"/>
</dbReference>
<dbReference type="PRINTS" id="PR00101">
    <property type="entry name" value="ATCASE"/>
</dbReference>
<dbReference type="SUPFAM" id="SSF53671">
    <property type="entry name" value="Aspartate/ornithine carbamoyltransferase"/>
    <property type="match status" value="1"/>
</dbReference>
<dbReference type="PROSITE" id="PS00097">
    <property type="entry name" value="CARBAMOYLTRANSFERASE"/>
    <property type="match status" value="1"/>
</dbReference>
<organism>
    <name type="scientific">Oceanobacillus iheyensis (strain DSM 14371 / CIP 107618 / JCM 11309 / KCTC 3954 / HTE831)</name>
    <dbReference type="NCBI Taxonomy" id="221109"/>
    <lineage>
        <taxon>Bacteria</taxon>
        <taxon>Bacillati</taxon>
        <taxon>Bacillota</taxon>
        <taxon>Bacilli</taxon>
        <taxon>Bacillales</taxon>
        <taxon>Bacillaceae</taxon>
        <taxon>Oceanobacillus</taxon>
    </lineage>
</organism>
<feature type="chain" id="PRO_0000113168" description="Aspartate carbamoyltransferase catalytic subunit">
    <location>
        <begin position="1"/>
        <end position="309"/>
    </location>
</feature>
<feature type="binding site" evidence="1">
    <location>
        <position position="48"/>
    </location>
    <ligand>
        <name>carbamoyl phosphate</name>
        <dbReference type="ChEBI" id="CHEBI:58228"/>
    </ligand>
</feature>
<feature type="binding site" evidence="1">
    <location>
        <position position="49"/>
    </location>
    <ligand>
        <name>carbamoyl phosphate</name>
        <dbReference type="ChEBI" id="CHEBI:58228"/>
    </ligand>
</feature>
<feature type="binding site" evidence="1">
    <location>
        <position position="76"/>
    </location>
    <ligand>
        <name>L-aspartate</name>
        <dbReference type="ChEBI" id="CHEBI:29991"/>
    </ligand>
</feature>
<feature type="binding site" evidence="1">
    <location>
        <position position="98"/>
    </location>
    <ligand>
        <name>carbamoyl phosphate</name>
        <dbReference type="ChEBI" id="CHEBI:58228"/>
    </ligand>
</feature>
<feature type="binding site" evidence="1">
    <location>
        <position position="128"/>
    </location>
    <ligand>
        <name>carbamoyl phosphate</name>
        <dbReference type="ChEBI" id="CHEBI:58228"/>
    </ligand>
</feature>
<feature type="binding site" evidence="1">
    <location>
        <position position="131"/>
    </location>
    <ligand>
        <name>carbamoyl phosphate</name>
        <dbReference type="ChEBI" id="CHEBI:58228"/>
    </ligand>
</feature>
<feature type="binding site" evidence="1">
    <location>
        <position position="161"/>
    </location>
    <ligand>
        <name>L-aspartate</name>
        <dbReference type="ChEBI" id="CHEBI:29991"/>
    </ligand>
</feature>
<feature type="binding site" evidence="1">
    <location>
        <position position="211"/>
    </location>
    <ligand>
        <name>L-aspartate</name>
        <dbReference type="ChEBI" id="CHEBI:29991"/>
    </ligand>
</feature>
<feature type="binding site" evidence="1">
    <location>
        <position position="250"/>
    </location>
    <ligand>
        <name>carbamoyl phosphate</name>
        <dbReference type="ChEBI" id="CHEBI:58228"/>
    </ligand>
</feature>
<feature type="binding site" evidence="1">
    <location>
        <position position="251"/>
    </location>
    <ligand>
        <name>carbamoyl phosphate</name>
        <dbReference type="ChEBI" id="CHEBI:58228"/>
    </ligand>
</feature>
<sequence>MRHFISVNQLEADEMYQIIRKANELRDRPNQLNRQLFAGNLFFEPSTRTKMSFSVAERKLGVEILDFHTEASSLAKGESLYDTAKTFEAIGANFLVIRHPSDQWISELEQGGKLNIPVINAGSGKEEHPTQCLLDLLTMYQEFGSIKGLKVVIAGDIKHSRVAKSNAMALTKLGAKVIFSAAPGFEDHTLDYPYLTMDEAIEEADVLMLLRIQHERHLHKAETSDYLSLYGLTKERYKKLQDHAILMHPAPINRGVEIDTNLVESEKSRIFKQMSNGVYVRMAIIMHVLSEWGIIHENNLIKRKSLTAI</sequence>
<proteinExistence type="inferred from homology"/>
<protein>
    <recommendedName>
        <fullName evidence="1">Aspartate carbamoyltransferase catalytic subunit</fullName>
        <ecNumber evidence="1">2.1.3.2</ecNumber>
    </recommendedName>
    <alternativeName>
        <fullName evidence="1">Aspartate transcarbamylase</fullName>
        <shortName evidence="1">ATCase</shortName>
    </alternativeName>
</protein>
<gene>
    <name evidence="1" type="primary">pyrB</name>
    <name type="ordered locus">OB1488</name>
</gene>
<keyword id="KW-0665">Pyrimidine biosynthesis</keyword>
<keyword id="KW-1185">Reference proteome</keyword>
<keyword id="KW-0808">Transferase</keyword>
<accession>Q8ER38</accession>
<comment type="function">
    <text evidence="1">Catalyzes the condensation of carbamoyl phosphate and aspartate to form carbamoyl aspartate and inorganic phosphate, the committed step in the de novo pyrimidine nucleotide biosynthesis pathway.</text>
</comment>
<comment type="catalytic activity">
    <reaction evidence="1">
        <text>carbamoyl phosphate + L-aspartate = N-carbamoyl-L-aspartate + phosphate + H(+)</text>
        <dbReference type="Rhea" id="RHEA:20013"/>
        <dbReference type="ChEBI" id="CHEBI:15378"/>
        <dbReference type="ChEBI" id="CHEBI:29991"/>
        <dbReference type="ChEBI" id="CHEBI:32814"/>
        <dbReference type="ChEBI" id="CHEBI:43474"/>
        <dbReference type="ChEBI" id="CHEBI:58228"/>
        <dbReference type="EC" id="2.1.3.2"/>
    </reaction>
</comment>
<comment type="pathway">
    <text evidence="1">Pyrimidine metabolism; UMP biosynthesis via de novo pathway; (S)-dihydroorotate from bicarbonate: step 2/3.</text>
</comment>
<comment type="subunit">
    <text evidence="1">Heterododecamer (2C3:3R2) of six catalytic PyrB chains organized as two trimers (C3), and six regulatory PyrI chains organized as three dimers (R2).</text>
</comment>
<comment type="similarity">
    <text evidence="1">Belongs to the aspartate/ornithine carbamoyltransferase superfamily. ATCase family.</text>
</comment>
<evidence type="ECO:0000255" key="1">
    <source>
        <dbReference type="HAMAP-Rule" id="MF_00001"/>
    </source>
</evidence>
<reference key="1">
    <citation type="journal article" date="2002" name="Nucleic Acids Res.">
        <title>Genome sequence of Oceanobacillus iheyensis isolated from the Iheya Ridge and its unexpected adaptive capabilities to extreme environments.</title>
        <authorList>
            <person name="Takami H."/>
            <person name="Takaki Y."/>
            <person name="Uchiyama I."/>
        </authorList>
    </citation>
    <scope>NUCLEOTIDE SEQUENCE [LARGE SCALE GENOMIC DNA]</scope>
    <source>
        <strain>DSM 14371 / CIP 107618 / JCM 11309 / KCTC 3954 / HTE831</strain>
    </source>
</reference>
<name>PYRB_OCEIH</name>